<protein>
    <recommendedName>
        <fullName evidence="1">3,4-dihydroxy-2-butanone 4-phosphate synthase</fullName>
        <shortName evidence="1">DHBP synthase</shortName>
        <ecNumber evidence="1">4.1.99.12</ecNumber>
    </recommendedName>
</protein>
<sequence length="217" mass="23353">MNQTLLSSFGTPFERVENALAALREGRGVMVLDDEDRENEGDMIFPAETMTVEQMALTIRHGSGIVCLCITEDRRKQLDLPMMVENNTSAYGTGFTVTIEAAEGVTTGVSAADRITTVRAAIADGAKPSDLNRPGHVFPLRAQAGGVLTRGGHTEATIDLMTLAGFKPAGVLCELTNDDGTMARAPECIEFANKHNMALVTIEDLVAYRQAHERKAS</sequence>
<reference key="1">
    <citation type="journal article" date="2002" name="Nucleic Acids Res.">
        <title>Genome sequence of Shigella flexneri 2a: insights into pathogenicity through comparison with genomes of Escherichia coli K12 and O157.</title>
        <authorList>
            <person name="Jin Q."/>
            <person name="Yuan Z."/>
            <person name="Xu J."/>
            <person name="Wang Y."/>
            <person name="Shen Y."/>
            <person name="Lu W."/>
            <person name="Wang J."/>
            <person name="Liu H."/>
            <person name="Yang J."/>
            <person name="Yang F."/>
            <person name="Zhang X."/>
            <person name="Zhang J."/>
            <person name="Yang G."/>
            <person name="Wu H."/>
            <person name="Qu D."/>
            <person name="Dong J."/>
            <person name="Sun L."/>
            <person name="Xue Y."/>
            <person name="Zhao A."/>
            <person name="Gao Y."/>
            <person name="Zhu J."/>
            <person name="Kan B."/>
            <person name="Ding K."/>
            <person name="Chen S."/>
            <person name="Cheng H."/>
            <person name="Yao Z."/>
            <person name="He B."/>
            <person name="Chen R."/>
            <person name="Ma D."/>
            <person name="Qiang B."/>
            <person name="Wen Y."/>
            <person name="Hou Y."/>
            <person name="Yu J."/>
        </authorList>
    </citation>
    <scope>NUCLEOTIDE SEQUENCE [LARGE SCALE GENOMIC DNA]</scope>
    <source>
        <strain>301 / Serotype 2a</strain>
    </source>
</reference>
<reference key="2">
    <citation type="journal article" date="2003" name="Infect. Immun.">
        <title>Complete genome sequence and comparative genomics of Shigella flexneri serotype 2a strain 2457T.</title>
        <authorList>
            <person name="Wei J."/>
            <person name="Goldberg M.B."/>
            <person name="Burland V."/>
            <person name="Venkatesan M.M."/>
            <person name="Deng W."/>
            <person name="Fournier G."/>
            <person name="Mayhew G.F."/>
            <person name="Plunkett G. III"/>
            <person name="Rose D.J."/>
            <person name="Darling A."/>
            <person name="Mau B."/>
            <person name="Perna N.T."/>
            <person name="Payne S.M."/>
            <person name="Runyen-Janecky L.J."/>
            <person name="Zhou S."/>
            <person name="Schwartz D.C."/>
            <person name="Blattner F.R."/>
        </authorList>
    </citation>
    <scope>NUCLEOTIDE SEQUENCE [LARGE SCALE GENOMIC DNA]</scope>
    <source>
        <strain>ATCC 700930 / 2457T / Serotype 2a</strain>
    </source>
</reference>
<dbReference type="EC" id="4.1.99.12" evidence="1"/>
<dbReference type="EMBL" id="AE005674">
    <property type="protein sequence ID" value="AAN44559.1"/>
    <property type="molecule type" value="Genomic_DNA"/>
</dbReference>
<dbReference type="EMBL" id="AE014073">
    <property type="protein sequence ID" value="AAP18372.1"/>
    <property type="molecule type" value="Genomic_DNA"/>
</dbReference>
<dbReference type="RefSeq" id="NP_708852.1">
    <property type="nucleotide sequence ID" value="NC_004337.2"/>
</dbReference>
<dbReference type="RefSeq" id="WP_001076997.1">
    <property type="nucleotide sequence ID" value="NZ_WPGW01000100.1"/>
</dbReference>
<dbReference type="SMR" id="P0A7J2"/>
<dbReference type="STRING" id="198214.SF3081"/>
<dbReference type="PaxDb" id="198214-SF3081"/>
<dbReference type="GeneID" id="1026655"/>
<dbReference type="GeneID" id="93778953"/>
<dbReference type="KEGG" id="sfl:SF3081"/>
<dbReference type="KEGG" id="sfx:S3286"/>
<dbReference type="PATRIC" id="fig|198214.7.peg.3657"/>
<dbReference type="HOGENOM" id="CLU_020273_3_0_6"/>
<dbReference type="UniPathway" id="UPA00275">
    <property type="reaction ID" value="UER00399"/>
</dbReference>
<dbReference type="Proteomes" id="UP000001006">
    <property type="component" value="Chromosome"/>
</dbReference>
<dbReference type="Proteomes" id="UP000002673">
    <property type="component" value="Chromosome"/>
</dbReference>
<dbReference type="GO" id="GO:0005829">
    <property type="term" value="C:cytosol"/>
    <property type="evidence" value="ECO:0007669"/>
    <property type="project" value="TreeGrafter"/>
</dbReference>
<dbReference type="GO" id="GO:0008686">
    <property type="term" value="F:3,4-dihydroxy-2-butanone-4-phosphate synthase activity"/>
    <property type="evidence" value="ECO:0007669"/>
    <property type="project" value="UniProtKB-UniRule"/>
</dbReference>
<dbReference type="GO" id="GO:0000287">
    <property type="term" value="F:magnesium ion binding"/>
    <property type="evidence" value="ECO:0007669"/>
    <property type="project" value="UniProtKB-UniRule"/>
</dbReference>
<dbReference type="GO" id="GO:0030145">
    <property type="term" value="F:manganese ion binding"/>
    <property type="evidence" value="ECO:0007669"/>
    <property type="project" value="UniProtKB-UniRule"/>
</dbReference>
<dbReference type="GO" id="GO:0009231">
    <property type="term" value="P:riboflavin biosynthetic process"/>
    <property type="evidence" value="ECO:0007669"/>
    <property type="project" value="UniProtKB-UniRule"/>
</dbReference>
<dbReference type="FunFam" id="3.90.870.10:FF:000002">
    <property type="entry name" value="3,4-dihydroxy-2-butanone 4-phosphate synthase"/>
    <property type="match status" value="1"/>
</dbReference>
<dbReference type="Gene3D" id="3.90.870.10">
    <property type="entry name" value="DHBP synthase"/>
    <property type="match status" value="1"/>
</dbReference>
<dbReference type="HAMAP" id="MF_00180">
    <property type="entry name" value="RibB"/>
    <property type="match status" value="1"/>
</dbReference>
<dbReference type="InterPro" id="IPR017945">
    <property type="entry name" value="DHBP_synth_RibB-like_a/b_dom"/>
</dbReference>
<dbReference type="InterPro" id="IPR000422">
    <property type="entry name" value="DHBP_synthase_RibB"/>
</dbReference>
<dbReference type="NCBIfam" id="TIGR00506">
    <property type="entry name" value="ribB"/>
    <property type="match status" value="1"/>
</dbReference>
<dbReference type="PANTHER" id="PTHR21327:SF38">
    <property type="entry name" value="3,4-DIHYDROXY-2-BUTANONE 4-PHOSPHATE SYNTHASE"/>
    <property type="match status" value="1"/>
</dbReference>
<dbReference type="PANTHER" id="PTHR21327">
    <property type="entry name" value="GTP CYCLOHYDROLASE II-RELATED"/>
    <property type="match status" value="1"/>
</dbReference>
<dbReference type="Pfam" id="PF00926">
    <property type="entry name" value="DHBP_synthase"/>
    <property type="match status" value="1"/>
</dbReference>
<dbReference type="SUPFAM" id="SSF55821">
    <property type="entry name" value="YrdC/RibB"/>
    <property type="match status" value="1"/>
</dbReference>
<name>RIBB_SHIFL</name>
<keyword id="KW-0456">Lyase</keyword>
<keyword id="KW-0460">Magnesium</keyword>
<keyword id="KW-0464">Manganese</keyword>
<keyword id="KW-0479">Metal-binding</keyword>
<keyword id="KW-1185">Reference proteome</keyword>
<keyword id="KW-0686">Riboflavin biosynthesis</keyword>
<organism>
    <name type="scientific">Shigella flexneri</name>
    <dbReference type="NCBI Taxonomy" id="623"/>
    <lineage>
        <taxon>Bacteria</taxon>
        <taxon>Pseudomonadati</taxon>
        <taxon>Pseudomonadota</taxon>
        <taxon>Gammaproteobacteria</taxon>
        <taxon>Enterobacterales</taxon>
        <taxon>Enterobacteriaceae</taxon>
        <taxon>Shigella</taxon>
    </lineage>
</organism>
<comment type="function">
    <text evidence="1">Catalyzes the conversion of D-ribulose 5-phosphate to formate and 3,4-dihydroxy-2-butanone 4-phosphate.</text>
</comment>
<comment type="catalytic activity">
    <reaction evidence="1">
        <text>D-ribulose 5-phosphate = (2S)-2-hydroxy-3-oxobutyl phosphate + formate + H(+)</text>
        <dbReference type="Rhea" id="RHEA:18457"/>
        <dbReference type="ChEBI" id="CHEBI:15378"/>
        <dbReference type="ChEBI" id="CHEBI:15740"/>
        <dbReference type="ChEBI" id="CHEBI:58121"/>
        <dbReference type="ChEBI" id="CHEBI:58830"/>
        <dbReference type="EC" id="4.1.99.12"/>
    </reaction>
</comment>
<comment type="cofactor">
    <cofactor evidence="1">
        <name>Mg(2+)</name>
        <dbReference type="ChEBI" id="CHEBI:18420"/>
    </cofactor>
    <cofactor evidence="1">
        <name>Mn(2+)</name>
        <dbReference type="ChEBI" id="CHEBI:29035"/>
    </cofactor>
    <text evidence="1">Binds 2 divalent metal cations per subunit. Magnesium or manganese.</text>
</comment>
<comment type="pathway">
    <text evidence="1">Cofactor biosynthesis; riboflavin biosynthesis; 2-hydroxy-3-oxobutyl phosphate from D-ribulose 5-phosphate: step 1/1.</text>
</comment>
<comment type="subunit">
    <text evidence="1">Homodimer.</text>
</comment>
<comment type="similarity">
    <text evidence="1">Belongs to the DHBP synthase family.</text>
</comment>
<accession>P0A7J2</accession>
<accession>P24199</accession>
<gene>
    <name evidence="1" type="primary">ribB</name>
    <name type="synonym">htrP</name>
    <name type="ordered locus">SF3081</name>
    <name type="ordered locus">S3286</name>
</gene>
<proteinExistence type="inferred from homology"/>
<evidence type="ECO:0000255" key="1">
    <source>
        <dbReference type="HAMAP-Rule" id="MF_00180"/>
    </source>
</evidence>
<feature type="chain" id="PRO_0000151812" description="3,4-dihydroxy-2-butanone 4-phosphate synthase">
    <location>
        <begin position="1"/>
        <end position="217"/>
    </location>
</feature>
<feature type="binding site" evidence="1">
    <location>
        <begin position="37"/>
        <end position="38"/>
    </location>
    <ligand>
        <name>D-ribulose 5-phosphate</name>
        <dbReference type="ChEBI" id="CHEBI:58121"/>
    </ligand>
</feature>
<feature type="binding site" evidence="1">
    <location>
        <position position="38"/>
    </location>
    <ligand>
        <name>Mg(2+)</name>
        <dbReference type="ChEBI" id="CHEBI:18420"/>
        <label>1</label>
    </ligand>
</feature>
<feature type="binding site" evidence="1">
    <location>
        <position position="38"/>
    </location>
    <ligand>
        <name>Mg(2+)</name>
        <dbReference type="ChEBI" id="CHEBI:18420"/>
        <label>2</label>
    </ligand>
</feature>
<feature type="binding site" evidence="1">
    <location>
        <position position="42"/>
    </location>
    <ligand>
        <name>D-ribulose 5-phosphate</name>
        <dbReference type="ChEBI" id="CHEBI:58121"/>
    </ligand>
</feature>
<feature type="binding site" evidence="1">
    <location>
        <begin position="150"/>
        <end position="154"/>
    </location>
    <ligand>
        <name>D-ribulose 5-phosphate</name>
        <dbReference type="ChEBI" id="CHEBI:58121"/>
    </ligand>
</feature>
<feature type="binding site" evidence="1">
    <location>
        <position position="153"/>
    </location>
    <ligand>
        <name>Mg(2+)</name>
        <dbReference type="ChEBI" id="CHEBI:18420"/>
        <label>2</label>
    </ligand>
</feature>
<feature type="binding site" evidence="1">
    <location>
        <position position="174"/>
    </location>
    <ligand>
        <name>D-ribulose 5-phosphate</name>
        <dbReference type="ChEBI" id="CHEBI:58121"/>
    </ligand>
</feature>
<feature type="site" description="Essential for catalytic activity" evidence="1">
    <location>
        <position position="136"/>
    </location>
</feature>
<feature type="site" description="Essential for catalytic activity" evidence="1">
    <location>
        <position position="174"/>
    </location>
</feature>